<sequence>MISEERLLKILLSPHVSEKTSISMEKFNTVVLKVLNNATKYEIKYAVKKIFDVDVDSIKTLKVKGKKKRQSNRIIQRSHWKKAYIKVKKGCNLDFIGNTE</sequence>
<gene>
    <name evidence="1" type="primary">rplW</name>
    <name type="ordered locus">BUAPTUC7_516</name>
</gene>
<keyword id="KW-0687">Ribonucleoprotein</keyword>
<keyword id="KW-0689">Ribosomal protein</keyword>
<keyword id="KW-0694">RNA-binding</keyword>
<keyword id="KW-0699">rRNA-binding</keyword>
<accession>B8D847</accession>
<dbReference type="EMBL" id="CP001158">
    <property type="protein sequence ID" value="ACL30312.1"/>
    <property type="molecule type" value="Genomic_DNA"/>
</dbReference>
<dbReference type="RefSeq" id="WP_009874473.1">
    <property type="nucleotide sequence ID" value="NC_011834.1"/>
</dbReference>
<dbReference type="SMR" id="B8D847"/>
<dbReference type="KEGG" id="bau:BUAPTUC7_516"/>
<dbReference type="HOGENOM" id="CLU_037562_3_1_6"/>
<dbReference type="GO" id="GO:1990904">
    <property type="term" value="C:ribonucleoprotein complex"/>
    <property type="evidence" value="ECO:0007669"/>
    <property type="project" value="UniProtKB-KW"/>
</dbReference>
<dbReference type="GO" id="GO:0005840">
    <property type="term" value="C:ribosome"/>
    <property type="evidence" value="ECO:0007669"/>
    <property type="project" value="UniProtKB-KW"/>
</dbReference>
<dbReference type="GO" id="GO:0019843">
    <property type="term" value="F:rRNA binding"/>
    <property type="evidence" value="ECO:0007669"/>
    <property type="project" value="UniProtKB-UniRule"/>
</dbReference>
<dbReference type="GO" id="GO:0003735">
    <property type="term" value="F:structural constituent of ribosome"/>
    <property type="evidence" value="ECO:0007669"/>
    <property type="project" value="InterPro"/>
</dbReference>
<dbReference type="GO" id="GO:0006412">
    <property type="term" value="P:translation"/>
    <property type="evidence" value="ECO:0007669"/>
    <property type="project" value="UniProtKB-UniRule"/>
</dbReference>
<dbReference type="FunFam" id="3.30.70.330:FF:000001">
    <property type="entry name" value="50S ribosomal protein L23"/>
    <property type="match status" value="1"/>
</dbReference>
<dbReference type="Gene3D" id="3.30.70.330">
    <property type="match status" value="1"/>
</dbReference>
<dbReference type="HAMAP" id="MF_01369_B">
    <property type="entry name" value="Ribosomal_uL23_B"/>
    <property type="match status" value="1"/>
</dbReference>
<dbReference type="InterPro" id="IPR012677">
    <property type="entry name" value="Nucleotide-bd_a/b_plait_sf"/>
</dbReference>
<dbReference type="InterPro" id="IPR013025">
    <property type="entry name" value="Ribosomal_uL23-like"/>
</dbReference>
<dbReference type="InterPro" id="IPR012678">
    <property type="entry name" value="Ribosomal_uL23/eL15/eS24_sf"/>
</dbReference>
<dbReference type="NCBIfam" id="NF004358">
    <property type="entry name" value="PRK05738.1-1"/>
    <property type="match status" value="1"/>
</dbReference>
<dbReference type="NCBIfam" id="NF004359">
    <property type="entry name" value="PRK05738.1-3"/>
    <property type="match status" value="1"/>
</dbReference>
<dbReference type="NCBIfam" id="NF004363">
    <property type="entry name" value="PRK05738.2-4"/>
    <property type="match status" value="1"/>
</dbReference>
<dbReference type="PANTHER" id="PTHR11620">
    <property type="entry name" value="60S RIBOSOMAL PROTEIN L23A"/>
    <property type="match status" value="1"/>
</dbReference>
<dbReference type="Pfam" id="PF00276">
    <property type="entry name" value="Ribosomal_L23"/>
    <property type="match status" value="1"/>
</dbReference>
<dbReference type="SUPFAM" id="SSF54189">
    <property type="entry name" value="Ribosomal proteins S24e, L23 and L15e"/>
    <property type="match status" value="1"/>
</dbReference>
<evidence type="ECO:0000255" key="1">
    <source>
        <dbReference type="HAMAP-Rule" id="MF_01369"/>
    </source>
</evidence>
<evidence type="ECO:0000305" key="2"/>
<feature type="chain" id="PRO_1000184071" description="Large ribosomal subunit protein uL23">
    <location>
        <begin position="1"/>
        <end position="100"/>
    </location>
</feature>
<comment type="function">
    <text evidence="1">One of the early assembly proteins it binds 23S rRNA. One of the proteins that surrounds the polypeptide exit tunnel on the outside of the ribosome. Forms the main docking site for trigger factor binding to the ribosome.</text>
</comment>
<comment type="subunit">
    <text evidence="1">Part of the 50S ribosomal subunit. Contacts protein L29, and trigger factor when it is bound to the ribosome.</text>
</comment>
<comment type="similarity">
    <text evidence="1">Belongs to the universal ribosomal protein uL23 family.</text>
</comment>
<protein>
    <recommendedName>
        <fullName evidence="1">Large ribosomal subunit protein uL23</fullName>
    </recommendedName>
    <alternativeName>
        <fullName evidence="2">50S ribosomal protein L23</fullName>
    </alternativeName>
</protein>
<reference key="1">
    <citation type="journal article" date="2009" name="Science">
        <title>The dynamics and time scale of ongoing genomic erosion in symbiotic bacteria.</title>
        <authorList>
            <person name="Moran N.A."/>
            <person name="McLaughlin H.J."/>
            <person name="Sorek R."/>
        </authorList>
    </citation>
    <scope>NUCLEOTIDE SEQUENCE [LARGE SCALE GENOMIC DNA]</scope>
    <source>
        <strain>Tuc7</strain>
    </source>
</reference>
<organism>
    <name type="scientific">Buchnera aphidicola subsp. Acyrthosiphon pisum (strain Tuc7)</name>
    <dbReference type="NCBI Taxonomy" id="561501"/>
    <lineage>
        <taxon>Bacteria</taxon>
        <taxon>Pseudomonadati</taxon>
        <taxon>Pseudomonadota</taxon>
        <taxon>Gammaproteobacteria</taxon>
        <taxon>Enterobacterales</taxon>
        <taxon>Erwiniaceae</taxon>
        <taxon>Buchnera</taxon>
    </lineage>
</organism>
<name>RL23_BUCAT</name>
<proteinExistence type="inferred from homology"/>